<protein>
    <recommendedName>
        <fullName evidence="1">NAD(P)H-quinone oxidoreductase subunit 3, chloroplastic</fullName>
        <ecNumber evidence="1">7.1.1.-</ecNumber>
    </recommendedName>
    <alternativeName>
        <fullName evidence="1">NAD(P)H dehydrogenase subunit 3</fullName>
    </alternativeName>
    <alternativeName>
        <fullName evidence="1">NADH-plastoquinone oxidoreductase subunit 3</fullName>
    </alternativeName>
</protein>
<geneLocation type="chloroplast"/>
<sequence>MFLLYEYDIFWAFLIISSAIPVLAFLISGVLSPIRKGPEKLSSYESGIEPIGDAWLQFRIRYYMFALVFVVFDVETVFLYPWAMSFDVLGVSAFIEALIFVLILILGLVYAWRKGALEWS</sequence>
<accession>A4QLB1</accession>
<proteinExistence type="inferred from homology"/>
<gene>
    <name evidence="1" type="primary">ndhC</name>
</gene>
<evidence type="ECO:0000255" key="1">
    <source>
        <dbReference type="HAMAP-Rule" id="MF_01394"/>
    </source>
</evidence>
<name>NU3C_LEPVR</name>
<dbReference type="EC" id="7.1.1.-" evidence="1"/>
<dbReference type="EMBL" id="AP009374">
    <property type="protein sequence ID" value="BAF50466.1"/>
    <property type="molecule type" value="Genomic_DNA"/>
</dbReference>
<dbReference type="RefSeq" id="YP_001123642.1">
    <property type="nucleotide sequence ID" value="NC_009273.1"/>
</dbReference>
<dbReference type="SMR" id="A4QLB1"/>
<dbReference type="GeneID" id="4962049"/>
<dbReference type="GO" id="GO:0009535">
    <property type="term" value="C:chloroplast thylakoid membrane"/>
    <property type="evidence" value="ECO:0007669"/>
    <property type="project" value="UniProtKB-SubCell"/>
</dbReference>
<dbReference type="GO" id="GO:0030964">
    <property type="term" value="C:NADH dehydrogenase complex"/>
    <property type="evidence" value="ECO:0007669"/>
    <property type="project" value="TreeGrafter"/>
</dbReference>
<dbReference type="GO" id="GO:0008137">
    <property type="term" value="F:NADH dehydrogenase (ubiquinone) activity"/>
    <property type="evidence" value="ECO:0007669"/>
    <property type="project" value="InterPro"/>
</dbReference>
<dbReference type="GO" id="GO:0048038">
    <property type="term" value="F:quinone binding"/>
    <property type="evidence" value="ECO:0007669"/>
    <property type="project" value="UniProtKB-KW"/>
</dbReference>
<dbReference type="GO" id="GO:0019684">
    <property type="term" value="P:photosynthesis, light reaction"/>
    <property type="evidence" value="ECO:0007669"/>
    <property type="project" value="UniProtKB-UniRule"/>
</dbReference>
<dbReference type="FunFam" id="1.20.58.1610:FF:000001">
    <property type="entry name" value="NAD(P)H-quinone oxidoreductase subunit 3, chloroplastic"/>
    <property type="match status" value="1"/>
</dbReference>
<dbReference type="Gene3D" id="1.20.58.1610">
    <property type="entry name" value="NADH:ubiquinone/plastoquinone oxidoreductase, chain 3"/>
    <property type="match status" value="1"/>
</dbReference>
<dbReference type="HAMAP" id="MF_01394">
    <property type="entry name" value="NDH1_NuoA"/>
    <property type="match status" value="1"/>
</dbReference>
<dbReference type="InterPro" id="IPR023043">
    <property type="entry name" value="NAD(P)H_OxRDtase_bac/plastid"/>
</dbReference>
<dbReference type="InterPro" id="IPR000440">
    <property type="entry name" value="NADH_UbQ/plastoQ_OxRdtase_su3"/>
</dbReference>
<dbReference type="InterPro" id="IPR038430">
    <property type="entry name" value="NDAH_ubi_oxred_su3_sf"/>
</dbReference>
<dbReference type="PANTHER" id="PTHR11058">
    <property type="entry name" value="NADH-UBIQUINONE OXIDOREDUCTASE CHAIN 3"/>
    <property type="match status" value="1"/>
</dbReference>
<dbReference type="PANTHER" id="PTHR11058:SF9">
    <property type="entry name" value="NADH-UBIQUINONE OXIDOREDUCTASE CHAIN 3"/>
    <property type="match status" value="1"/>
</dbReference>
<dbReference type="Pfam" id="PF00507">
    <property type="entry name" value="Oxidored_q4"/>
    <property type="match status" value="1"/>
</dbReference>
<reference key="1">
    <citation type="submission" date="2007-03" db="EMBL/GenBank/DDBJ databases">
        <title>Sequencing analysis of Lepidium virginicum JO26 chloroplast DNA.</title>
        <authorList>
            <person name="Hosouchi T."/>
            <person name="Tsuruoka H."/>
            <person name="Kotani H."/>
        </authorList>
    </citation>
    <scope>NUCLEOTIDE SEQUENCE [LARGE SCALE GENOMIC DNA]</scope>
</reference>
<organism>
    <name type="scientific">Lepidium virginicum</name>
    <name type="common">Virginia pepperweed</name>
    <dbReference type="NCBI Taxonomy" id="59292"/>
    <lineage>
        <taxon>Eukaryota</taxon>
        <taxon>Viridiplantae</taxon>
        <taxon>Streptophyta</taxon>
        <taxon>Embryophyta</taxon>
        <taxon>Tracheophyta</taxon>
        <taxon>Spermatophyta</taxon>
        <taxon>Magnoliopsida</taxon>
        <taxon>eudicotyledons</taxon>
        <taxon>Gunneridae</taxon>
        <taxon>Pentapetalae</taxon>
        <taxon>rosids</taxon>
        <taxon>malvids</taxon>
        <taxon>Brassicales</taxon>
        <taxon>Brassicaceae</taxon>
        <taxon>Lepidieae</taxon>
        <taxon>Lepidium</taxon>
    </lineage>
</organism>
<keyword id="KW-0150">Chloroplast</keyword>
<keyword id="KW-0472">Membrane</keyword>
<keyword id="KW-0520">NAD</keyword>
<keyword id="KW-0521">NADP</keyword>
<keyword id="KW-0934">Plastid</keyword>
<keyword id="KW-0618">Plastoquinone</keyword>
<keyword id="KW-0874">Quinone</keyword>
<keyword id="KW-0793">Thylakoid</keyword>
<keyword id="KW-1278">Translocase</keyword>
<keyword id="KW-0812">Transmembrane</keyword>
<keyword id="KW-1133">Transmembrane helix</keyword>
<keyword id="KW-0813">Transport</keyword>
<feature type="chain" id="PRO_0000362845" description="NAD(P)H-quinone oxidoreductase subunit 3, chloroplastic">
    <location>
        <begin position="1"/>
        <end position="120"/>
    </location>
</feature>
<feature type="transmembrane region" description="Helical" evidence="1">
    <location>
        <begin position="9"/>
        <end position="29"/>
    </location>
</feature>
<feature type="transmembrane region" description="Helical" evidence="1">
    <location>
        <begin position="64"/>
        <end position="84"/>
    </location>
</feature>
<feature type="transmembrane region" description="Helical" evidence="1">
    <location>
        <begin position="88"/>
        <end position="108"/>
    </location>
</feature>
<comment type="function">
    <text evidence="1">NDH shuttles electrons from NAD(P)H:plastoquinone, via FMN and iron-sulfur (Fe-S) centers, to quinones in the photosynthetic chain and possibly in a chloroplast respiratory chain. The immediate electron acceptor for the enzyme in this species is believed to be plastoquinone. Couples the redox reaction to proton translocation, and thus conserves the redox energy in a proton gradient.</text>
</comment>
<comment type="catalytic activity">
    <reaction evidence="1">
        <text>a plastoquinone + NADH + (n+1) H(+)(in) = a plastoquinol + NAD(+) + n H(+)(out)</text>
        <dbReference type="Rhea" id="RHEA:42608"/>
        <dbReference type="Rhea" id="RHEA-COMP:9561"/>
        <dbReference type="Rhea" id="RHEA-COMP:9562"/>
        <dbReference type="ChEBI" id="CHEBI:15378"/>
        <dbReference type="ChEBI" id="CHEBI:17757"/>
        <dbReference type="ChEBI" id="CHEBI:57540"/>
        <dbReference type="ChEBI" id="CHEBI:57945"/>
        <dbReference type="ChEBI" id="CHEBI:62192"/>
    </reaction>
</comment>
<comment type="catalytic activity">
    <reaction evidence="1">
        <text>a plastoquinone + NADPH + (n+1) H(+)(in) = a plastoquinol + NADP(+) + n H(+)(out)</text>
        <dbReference type="Rhea" id="RHEA:42612"/>
        <dbReference type="Rhea" id="RHEA-COMP:9561"/>
        <dbReference type="Rhea" id="RHEA-COMP:9562"/>
        <dbReference type="ChEBI" id="CHEBI:15378"/>
        <dbReference type="ChEBI" id="CHEBI:17757"/>
        <dbReference type="ChEBI" id="CHEBI:57783"/>
        <dbReference type="ChEBI" id="CHEBI:58349"/>
        <dbReference type="ChEBI" id="CHEBI:62192"/>
    </reaction>
</comment>
<comment type="subunit">
    <text evidence="1">NDH is composed of at least 16 different subunits, 5 of which are encoded in the nucleus.</text>
</comment>
<comment type="subcellular location">
    <subcellularLocation>
        <location evidence="1">Plastid</location>
        <location evidence="1">Chloroplast thylakoid membrane</location>
        <topology evidence="1">Multi-pass membrane protein</topology>
    </subcellularLocation>
</comment>
<comment type="similarity">
    <text evidence="1">Belongs to the complex I subunit 3 family.</text>
</comment>